<accession>A7M919</accession>
<keyword id="KW-0934">Plastid</keyword>
<keyword id="KW-0687">Ribonucleoprotein</keyword>
<keyword id="KW-0689">Ribosomal protein</keyword>
<keyword id="KW-0694">RNA-binding</keyword>
<keyword id="KW-0699">rRNA-binding</keyword>
<comment type="subunit">
    <text evidence="1">Part of the 30S ribosomal subunit.</text>
</comment>
<comment type="subcellular location">
    <subcellularLocation>
        <location>Plastid</location>
    </subcellularLocation>
</comment>
<comment type="similarity">
    <text evidence="1">Belongs to the bacterial ribosomal protein bS18 family.</text>
</comment>
<evidence type="ECO:0000255" key="1">
    <source>
        <dbReference type="HAMAP-Rule" id="MF_00270"/>
    </source>
</evidence>
<evidence type="ECO:0000256" key="2">
    <source>
        <dbReference type="SAM" id="MobiDB-lite"/>
    </source>
</evidence>
<evidence type="ECO:0000305" key="3"/>
<geneLocation type="plastid"/>
<dbReference type="EMBL" id="AM711639">
    <property type="protein sequence ID" value="CAM98347.1"/>
    <property type="molecule type" value="Genomic_DNA"/>
</dbReference>
<dbReference type="RefSeq" id="YP_001430061.1">
    <property type="nucleotide sequence ID" value="NC_009765.1"/>
</dbReference>
<dbReference type="SMR" id="A7M919"/>
<dbReference type="GeneID" id="5536707"/>
<dbReference type="GO" id="GO:0005763">
    <property type="term" value="C:mitochondrial small ribosomal subunit"/>
    <property type="evidence" value="ECO:0007669"/>
    <property type="project" value="TreeGrafter"/>
</dbReference>
<dbReference type="GO" id="GO:0009536">
    <property type="term" value="C:plastid"/>
    <property type="evidence" value="ECO:0007669"/>
    <property type="project" value="UniProtKB-SubCell"/>
</dbReference>
<dbReference type="GO" id="GO:0070181">
    <property type="term" value="F:small ribosomal subunit rRNA binding"/>
    <property type="evidence" value="ECO:0007669"/>
    <property type="project" value="TreeGrafter"/>
</dbReference>
<dbReference type="GO" id="GO:0003735">
    <property type="term" value="F:structural constituent of ribosome"/>
    <property type="evidence" value="ECO:0007669"/>
    <property type="project" value="InterPro"/>
</dbReference>
<dbReference type="GO" id="GO:0006412">
    <property type="term" value="P:translation"/>
    <property type="evidence" value="ECO:0007669"/>
    <property type="project" value="InterPro"/>
</dbReference>
<dbReference type="FunFam" id="4.10.640.10:FF:000002">
    <property type="entry name" value="30S ribosomal protein S18, chloroplastic"/>
    <property type="match status" value="1"/>
</dbReference>
<dbReference type="Gene3D" id="4.10.640.10">
    <property type="entry name" value="Ribosomal protein S18"/>
    <property type="match status" value="1"/>
</dbReference>
<dbReference type="HAMAP" id="MF_00270">
    <property type="entry name" value="Ribosomal_bS18"/>
    <property type="match status" value="1"/>
</dbReference>
<dbReference type="InterPro" id="IPR001648">
    <property type="entry name" value="Ribosomal_bS18"/>
</dbReference>
<dbReference type="InterPro" id="IPR036870">
    <property type="entry name" value="Ribosomal_bS18_sf"/>
</dbReference>
<dbReference type="NCBIfam" id="TIGR00165">
    <property type="entry name" value="S18"/>
    <property type="match status" value="1"/>
</dbReference>
<dbReference type="PANTHER" id="PTHR13479">
    <property type="entry name" value="30S RIBOSOMAL PROTEIN S18"/>
    <property type="match status" value="1"/>
</dbReference>
<dbReference type="PANTHER" id="PTHR13479:SF40">
    <property type="entry name" value="SMALL RIBOSOMAL SUBUNIT PROTEIN BS18M"/>
    <property type="match status" value="1"/>
</dbReference>
<dbReference type="Pfam" id="PF01084">
    <property type="entry name" value="Ribosomal_S18"/>
    <property type="match status" value="1"/>
</dbReference>
<dbReference type="PRINTS" id="PR00974">
    <property type="entry name" value="RIBOSOMALS18"/>
</dbReference>
<dbReference type="SUPFAM" id="SSF46911">
    <property type="entry name" value="Ribosomal protein S18"/>
    <property type="match status" value="1"/>
</dbReference>
<gene>
    <name evidence="1" type="primary">rps18</name>
</gene>
<feature type="chain" id="PRO_0000345579" description="Small ribosomal subunit protein bS18c">
    <location>
        <begin position="1"/>
        <end position="142"/>
    </location>
</feature>
<feature type="region of interest" description="Disordered" evidence="2">
    <location>
        <begin position="1"/>
        <end position="21"/>
    </location>
</feature>
<proteinExistence type="inferred from homology"/>
<organism>
    <name type="scientific">Cuscuta gronovii</name>
    <name type="common">Common dodder</name>
    <name type="synonym">Epithymum gronovii</name>
    <dbReference type="NCBI Taxonomy" id="35886"/>
    <lineage>
        <taxon>Eukaryota</taxon>
        <taxon>Viridiplantae</taxon>
        <taxon>Streptophyta</taxon>
        <taxon>Embryophyta</taxon>
        <taxon>Tracheophyta</taxon>
        <taxon>Spermatophyta</taxon>
        <taxon>Magnoliopsida</taxon>
        <taxon>eudicotyledons</taxon>
        <taxon>Gunneridae</taxon>
        <taxon>Pentapetalae</taxon>
        <taxon>asterids</taxon>
        <taxon>lamiids</taxon>
        <taxon>Solanales</taxon>
        <taxon>Convolvulaceae</taxon>
        <taxon>Cuscuteae</taxon>
        <taxon>Cuscuta</taxon>
        <taxon>Cuscuta subgen. Grammica</taxon>
        <taxon>Cuscuta sect. Oxycarpae</taxon>
    </lineage>
</organism>
<sequence>MDRITGPFRKSKKSFRKPLPPIQSGDRIDYQNIDLLRRFISQQGKILSRRVTRLTLKQQRLLNLAIKQARILSFLPFTNTESLEKMKARIREARLKAEEVRLKNKEARFKKAKEARNQKKTTFRKIFINPKNSKLNTETNQI</sequence>
<name>RR18_CUSGR</name>
<protein>
    <recommendedName>
        <fullName evidence="3">Small ribosomal subunit protein bS18c</fullName>
    </recommendedName>
    <alternativeName>
        <fullName>Plastid 30S ribosomal protein S18</fullName>
    </alternativeName>
</protein>
<reference key="1">
    <citation type="journal article" date="2007" name="BMC Plant Biol.">
        <title>Complete DNA sequences of the plastid genomes of two parasitic flowering plant species, Cuscuta reflexa and Cuscuta gronovii.</title>
        <authorList>
            <person name="Funk H.T."/>
            <person name="Berg S."/>
            <person name="Krupinska K."/>
            <person name="Maier U.-G."/>
            <person name="Krause K."/>
        </authorList>
    </citation>
    <scope>NUCLEOTIDE SEQUENCE [LARGE SCALE GENOMIC DNA]</scope>
</reference>